<protein>
    <recommendedName>
        <fullName evidence="1">Large ribosomal subunit protein bL33</fullName>
    </recommendedName>
    <alternativeName>
        <fullName evidence="2">50S ribosomal protein L33</fullName>
    </alternativeName>
</protein>
<reference key="1">
    <citation type="submission" date="2007-12" db="EMBL/GenBank/DDBJ databases">
        <title>Complete sequence of Methylobacterium extorquens PA1.</title>
        <authorList>
            <consortium name="US DOE Joint Genome Institute"/>
            <person name="Copeland A."/>
            <person name="Lucas S."/>
            <person name="Lapidus A."/>
            <person name="Barry K."/>
            <person name="Glavina del Rio T."/>
            <person name="Dalin E."/>
            <person name="Tice H."/>
            <person name="Pitluck S."/>
            <person name="Saunders E."/>
            <person name="Brettin T."/>
            <person name="Bruce D."/>
            <person name="Detter J.C."/>
            <person name="Han C."/>
            <person name="Schmutz J."/>
            <person name="Larimer F."/>
            <person name="Land M."/>
            <person name="Hauser L."/>
            <person name="Kyrpides N."/>
            <person name="Kim E."/>
            <person name="Marx C."/>
            <person name="Richardson P."/>
        </authorList>
    </citation>
    <scope>NUCLEOTIDE SEQUENCE [LARGE SCALE GENOMIC DNA]</scope>
    <source>
        <strain>PA1</strain>
    </source>
</reference>
<proteinExistence type="inferred from homology"/>
<accession>A9W3L4</accession>
<dbReference type="EMBL" id="CP000908">
    <property type="protein sequence ID" value="ABY30170.1"/>
    <property type="molecule type" value="Genomic_DNA"/>
</dbReference>
<dbReference type="RefSeq" id="WP_003602581.1">
    <property type="nucleotide sequence ID" value="NC_010172.1"/>
</dbReference>
<dbReference type="SMR" id="A9W3L4"/>
<dbReference type="GeneID" id="72989427"/>
<dbReference type="KEGG" id="mex:Mext_1771"/>
<dbReference type="eggNOG" id="COG0267">
    <property type="taxonomic scope" value="Bacteria"/>
</dbReference>
<dbReference type="HOGENOM" id="CLU_190949_1_1_5"/>
<dbReference type="BioCyc" id="MEXT419610:MEXT_RS08980-MONOMER"/>
<dbReference type="GO" id="GO:0022625">
    <property type="term" value="C:cytosolic large ribosomal subunit"/>
    <property type="evidence" value="ECO:0007669"/>
    <property type="project" value="TreeGrafter"/>
</dbReference>
<dbReference type="GO" id="GO:0003735">
    <property type="term" value="F:structural constituent of ribosome"/>
    <property type="evidence" value="ECO:0007669"/>
    <property type="project" value="InterPro"/>
</dbReference>
<dbReference type="GO" id="GO:0006412">
    <property type="term" value="P:translation"/>
    <property type="evidence" value="ECO:0007669"/>
    <property type="project" value="UniProtKB-UniRule"/>
</dbReference>
<dbReference type="Gene3D" id="2.20.28.120">
    <property type="entry name" value="Ribosomal protein L33"/>
    <property type="match status" value="1"/>
</dbReference>
<dbReference type="HAMAP" id="MF_00294">
    <property type="entry name" value="Ribosomal_bL33"/>
    <property type="match status" value="1"/>
</dbReference>
<dbReference type="InterPro" id="IPR001705">
    <property type="entry name" value="Ribosomal_bL33"/>
</dbReference>
<dbReference type="InterPro" id="IPR018264">
    <property type="entry name" value="Ribosomal_bL33_CS"/>
</dbReference>
<dbReference type="InterPro" id="IPR038584">
    <property type="entry name" value="Ribosomal_bL33_sf"/>
</dbReference>
<dbReference type="InterPro" id="IPR011332">
    <property type="entry name" value="Ribosomal_zn-bd"/>
</dbReference>
<dbReference type="NCBIfam" id="NF001860">
    <property type="entry name" value="PRK00595.1"/>
    <property type="match status" value="1"/>
</dbReference>
<dbReference type="NCBIfam" id="TIGR01023">
    <property type="entry name" value="rpmG_bact"/>
    <property type="match status" value="1"/>
</dbReference>
<dbReference type="PANTHER" id="PTHR15238">
    <property type="entry name" value="54S RIBOSOMAL PROTEIN L39, MITOCHONDRIAL"/>
    <property type="match status" value="1"/>
</dbReference>
<dbReference type="PANTHER" id="PTHR15238:SF1">
    <property type="entry name" value="LARGE RIBOSOMAL SUBUNIT PROTEIN BL33M"/>
    <property type="match status" value="1"/>
</dbReference>
<dbReference type="Pfam" id="PF00471">
    <property type="entry name" value="Ribosomal_L33"/>
    <property type="match status" value="1"/>
</dbReference>
<dbReference type="SUPFAM" id="SSF57829">
    <property type="entry name" value="Zn-binding ribosomal proteins"/>
    <property type="match status" value="1"/>
</dbReference>
<dbReference type="PROSITE" id="PS00582">
    <property type="entry name" value="RIBOSOMAL_L33"/>
    <property type="match status" value="1"/>
</dbReference>
<organism>
    <name type="scientific">Methylorubrum extorquens (strain PA1)</name>
    <name type="common">Methylobacterium extorquens</name>
    <dbReference type="NCBI Taxonomy" id="419610"/>
    <lineage>
        <taxon>Bacteria</taxon>
        <taxon>Pseudomonadati</taxon>
        <taxon>Pseudomonadota</taxon>
        <taxon>Alphaproteobacteria</taxon>
        <taxon>Hyphomicrobiales</taxon>
        <taxon>Methylobacteriaceae</taxon>
        <taxon>Methylorubrum</taxon>
    </lineage>
</organism>
<comment type="similarity">
    <text evidence="1">Belongs to the bacterial ribosomal protein bL33 family.</text>
</comment>
<gene>
    <name evidence="1" type="primary">rpmG</name>
    <name type="ordered locus">Mext_1771</name>
</gene>
<keyword id="KW-0687">Ribonucleoprotein</keyword>
<keyword id="KW-0689">Ribosomal protein</keyword>
<evidence type="ECO:0000255" key="1">
    <source>
        <dbReference type="HAMAP-Rule" id="MF_00294"/>
    </source>
</evidence>
<evidence type="ECO:0000305" key="2"/>
<feature type="chain" id="PRO_1000115138" description="Large ribosomal subunit protein bL33">
    <location>
        <begin position="1"/>
        <end position="55"/>
    </location>
</feature>
<name>RL33_METEP</name>
<sequence>MAKAVTVKIRLVSTADTGYFYVTKKNSRTQTEKMVMKKYDPVARKHVEFKEAKIK</sequence>